<keyword id="KW-0028">Amino-acid biosynthesis</keyword>
<keyword id="KW-0057">Aromatic amino acid biosynthesis</keyword>
<keyword id="KW-0456">Lyase</keyword>
<keyword id="KW-0663">Pyridoxal phosphate</keyword>
<keyword id="KW-1185">Reference proteome</keyword>
<keyword id="KW-0822">Tryptophan biosynthesis</keyword>
<organism>
    <name type="scientific">Ralstonia nicotianae (strain ATCC BAA-1114 / GMI1000)</name>
    <name type="common">Ralstonia solanacearum</name>
    <dbReference type="NCBI Taxonomy" id="267608"/>
    <lineage>
        <taxon>Bacteria</taxon>
        <taxon>Pseudomonadati</taxon>
        <taxon>Pseudomonadota</taxon>
        <taxon>Betaproteobacteria</taxon>
        <taxon>Burkholderiales</taxon>
        <taxon>Burkholderiaceae</taxon>
        <taxon>Ralstonia</taxon>
        <taxon>Ralstonia solanacearum species complex</taxon>
    </lineage>
</organism>
<feature type="chain" id="PRO_0000098987" description="Tryptophan synthase beta chain">
    <location>
        <begin position="1"/>
        <end position="403"/>
    </location>
</feature>
<feature type="modified residue" description="N6-(pyridoxal phosphate)lysine" evidence="1">
    <location>
        <position position="96"/>
    </location>
</feature>
<evidence type="ECO:0000255" key="1">
    <source>
        <dbReference type="HAMAP-Rule" id="MF_00133"/>
    </source>
</evidence>
<gene>
    <name evidence="1" type="primary">trpB</name>
    <name type="ordered locus">RSc1983</name>
    <name type="ORF">RS03412</name>
</gene>
<proteinExistence type="inferred from homology"/>
<reference key="1">
    <citation type="journal article" date="2002" name="Nature">
        <title>Genome sequence of the plant pathogen Ralstonia solanacearum.</title>
        <authorList>
            <person name="Salanoubat M."/>
            <person name="Genin S."/>
            <person name="Artiguenave F."/>
            <person name="Gouzy J."/>
            <person name="Mangenot S."/>
            <person name="Arlat M."/>
            <person name="Billault A."/>
            <person name="Brottier P."/>
            <person name="Camus J.-C."/>
            <person name="Cattolico L."/>
            <person name="Chandler M."/>
            <person name="Choisne N."/>
            <person name="Claudel-Renard C."/>
            <person name="Cunnac S."/>
            <person name="Demange N."/>
            <person name="Gaspin C."/>
            <person name="Lavie M."/>
            <person name="Moisan A."/>
            <person name="Robert C."/>
            <person name="Saurin W."/>
            <person name="Schiex T."/>
            <person name="Siguier P."/>
            <person name="Thebault P."/>
            <person name="Whalen M."/>
            <person name="Wincker P."/>
            <person name="Levy M."/>
            <person name="Weissenbach J."/>
            <person name="Boucher C.A."/>
        </authorList>
    </citation>
    <scope>NUCLEOTIDE SEQUENCE [LARGE SCALE GENOMIC DNA]</scope>
    <source>
        <strain>ATCC BAA-1114 / GMI1000</strain>
    </source>
</reference>
<accession>Q8XXY0</accession>
<protein>
    <recommendedName>
        <fullName evidence="1">Tryptophan synthase beta chain</fullName>
        <ecNumber evidence="1">4.2.1.20</ecNumber>
    </recommendedName>
</protein>
<comment type="function">
    <text evidence="1">The beta subunit is responsible for the synthesis of L-tryptophan from indole and L-serine.</text>
</comment>
<comment type="catalytic activity">
    <reaction evidence="1">
        <text>(1S,2R)-1-C-(indol-3-yl)glycerol 3-phosphate + L-serine = D-glyceraldehyde 3-phosphate + L-tryptophan + H2O</text>
        <dbReference type="Rhea" id="RHEA:10532"/>
        <dbReference type="ChEBI" id="CHEBI:15377"/>
        <dbReference type="ChEBI" id="CHEBI:33384"/>
        <dbReference type="ChEBI" id="CHEBI:57912"/>
        <dbReference type="ChEBI" id="CHEBI:58866"/>
        <dbReference type="ChEBI" id="CHEBI:59776"/>
        <dbReference type="EC" id="4.2.1.20"/>
    </reaction>
</comment>
<comment type="cofactor">
    <cofactor evidence="1">
        <name>pyridoxal 5'-phosphate</name>
        <dbReference type="ChEBI" id="CHEBI:597326"/>
    </cofactor>
</comment>
<comment type="pathway">
    <text evidence="1">Amino-acid biosynthesis; L-tryptophan biosynthesis; L-tryptophan from chorismate: step 5/5.</text>
</comment>
<comment type="subunit">
    <text evidence="1">Tetramer of two alpha and two beta chains.</text>
</comment>
<comment type="similarity">
    <text evidence="1">Belongs to the TrpB family.</text>
</comment>
<name>TRPB_RALN1</name>
<dbReference type="EC" id="4.2.1.20" evidence="1"/>
<dbReference type="EMBL" id="AL646052">
    <property type="protein sequence ID" value="CAD15685.1"/>
    <property type="molecule type" value="Genomic_DNA"/>
</dbReference>
<dbReference type="SMR" id="Q8XXY0"/>
<dbReference type="STRING" id="267608.RSc1983"/>
<dbReference type="EnsemblBacteria" id="CAD15685">
    <property type="protein sequence ID" value="CAD15685"/>
    <property type="gene ID" value="RSc1983"/>
</dbReference>
<dbReference type="KEGG" id="rso:RSc1983"/>
<dbReference type="eggNOG" id="COG0133">
    <property type="taxonomic scope" value="Bacteria"/>
</dbReference>
<dbReference type="HOGENOM" id="CLU_016734_3_1_4"/>
<dbReference type="UniPathway" id="UPA00035">
    <property type="reaction ID" value="UER00044"/>
</dbReference>
<dbReference type="Proteomes" id="UP000001436">
    <property type="component" value="Chromosome"/>
</dbReference>
<dbReference type="GO" id="GO:0005737">
    <property type="term" value="C:cytoplasm"/>
    <property type="evidence" value="ECO:0007669"/>
    <property type="project" value="TreeGrafter"/>
</dbReference>
<dbReference type="GO" id="GO:0004834">
    <property type="term" value="F:tryptophan synthase activity"/>
    <property type="evidence" value="ECO:0007669"/>
    <property type="project" value="UniProtKB-UniRule"/>
</dbReference>
<dbReference type="CDD" id="cd06446">
    <property type="entry name" value="Trp-synth_B"/>
    <property type="match status" value="1"/>
</dbReference>
<dbReference type="FunFam" id="3.40.50.1100:FF:000001">
    <property type="entry name" value="Tryptophan synthase beta chain"/>
    <property type="match status" value="1"/>
</dbReference>
<dbReference type="FunFam" id="3.40.50.1100:FF:000004">
    <property type="entry name" value="Tryptophan synthase beta chain"/>
    <property type="match status" value="1"/>
</dbReference>
<dbReference type="Gene3D" id="3.40.50.1100">
    <property type="match status" value="2"/>
</dbReference>
<dbReference type="HAMAP" id="MF_00133">
    <property type="entry name" value="Trp_synth_beta"/>
    <property type="match status" value="1"/>
</dbReference>
<dbReference type="InterPro" id="IPR006653">
    <property type="entry name" value="Trp_synth_b_CS"/>
</dbReference>
<dbReference type="InterPro" id="IPR006654">
    <property type="entry name" value="Trp_synth_beta"/>
</dbReference>
<dbReference type="InterPro" id="IPR023026">
    <property type="entry name" value="Trp_synth_beta/beta-like"/>
</dbReference>
<dbReference type="InterPro" id="IPR001926">
    <property type="entry name" value="TrpB-like_PALP"/>
</dbReference>
<dbReference type="InterPro" id="IPR036052">
    <property type="entry name" value="TrpB-like_PALP_sf"/>
</dbReference>
<dbReference type="NCBIfam" id="TIGR00263">
    <property type="entry name" value="trpB"/>
    <property type="match status" value="1"/>
</dbReference>
<dbReference type="PANTHER" id="PTHR48077:SF3">
    <property type="entry name" value="TRYPTOPHAN SYNTHASE"/>
    <property type="match status" value="1"/>
</dbReference>
<dbReference type="PANTHER" id="PTHR48077">
    <property type="entry name" value="TRYPTOPHAN SYNTHASE-RELATED"/>
    <property type="match status" value="1"/>
</dbReference>
<dbReference type="Pfam" id="PF00291">
    <property type="entry name" value="PALP"/>
    <property type="match status" value="1"/>
</dbReference>
<dbReference type="PIRSF" id="PIRSF001413">
    <property type="entry name" value="Trp_syn_beta"/>
    <property type="match status" value="1"/>
</dbReference>
<dbReference type="SUPFAM" id="SSF53686">
    <property type="entry name" value="Tryptophan synthase beta subunit-like PLP-dependent enzymes"/>
    <property type="match status" value="1"/>
</dbReference>
<dbReference type="PROSITE" id="PS00168">
    <property type="entry name" value="TRP_SYNTHASE_BETA"/>
    <property type="match status" value="1"/>
</dbReference>
<sequence length="403" mass="43801">MPREIAMYNLPDAHGHFGPYGGTFVAETLSHALDELRDAYARYQHDPEFIKEYEYELKHFVGRPSPIYHARRLTEHCGGAQIYLKREDLNHTGAHKVNNVIGQALLARRMGKPRVIAETGAGQHGVATATIAARYGMECVVYMGSEDVRRQAANVYRMKLLGATVVPVESGSRTLKDALNEAMRDWVTNVADTFYIIGTVAGPHPYPMMVRDFQAVIGEECKVQMPELAGRQPDAVIACVGGGSNAMGIFYPYIDHASVQLIGVEAAGEGLESGRHAASLTGGSPGVLHGNRTYLLQDEDGQIIETHSISAGLDYPGVGPEHAWLKDAGRAQYVGITDKEALQAFHDLCRMEGIIPALESSHALAYACKLAPTLPKDKILLVNLSGRGDKDMHTVAELSGIDL</sequence>